<organism>
    <name type="scientific">Mycolicibacterium paratuberculosis (strain ATCC BAA-968 / K-10)</name>
    <name type="common">Mycobacterium paratuberculosis</name>
    <dbReference type="NCBI Taxonomy" id="262316"/>
    <lineage>
        <taxon>Bacteria</taxon>
        <taxon>Bacillati</taxon>
        <taxon>Actinomycetota</taxon>
        <taxon>Actinomycetes</taxon>
        <taxon>Mycobacteriales</taxon>
        <taxon>Mycobacteriaceae</taxon>
        <taxon>Mycobacterium</taxon>
        <taxon>Mycobacterium avium complex (MAC)</taxon>
    </lineage>
</organism>
<dbReference type="EC" id="2.1.1.163" evidence="1"/>
<dbReference type="EMBL" id="AE016958">
    <property type="protein sequence ID" value="AAS06605.1"/>
    <property type="status" value="ALT_INIT"/>
    <property type="molecule type" value="Genomic_DNA"/>
</dbReference>
<dbReference type="RefSeq" id="WP_003879353.1">
    <property type="nucleotide sequence ID" value="NZ_CP106873.1"/>
</dbReference>
<dbReference type="SMR" id="Q73SL8"/>
<dbReference type="STRING" id="262316.MAP_4055"/>
<dbReference type="KEGG" id="mpa:MAP_4055"/>
<dbReference type="eggNOG" id="COG2226">
    <property type="taxonomic scope" value="Bacteria"/>
</dbReference>
<dbReference type="HOGENOM" id="CLU_037990_0_0_11"/>
<dbReference type="UniPathway" id="UPA00079">
    <property type="reaction ID" value="UER00169"/>
</dbReference>
<dbReference type="Proteomes" id="UP000000580">
    <property type="component" value="Chromosome"/>
</dbReference>
<dbReference type="GO" id="GO:0043770">
    <property type="term" value="F:demethylmenaquinone methyltransferase activity"/>
    <property type="evidence" value="ECO:0007669"/>
    <property type="project" value="UniProtKB-UniRule"/>
</dbReference>
<dbReference type="GO" id="GO:0009234">
    <property type="term" value="P:menaquinone biosynthetic process"/>
    <property type="evidence" value="ECO:0007669"/>
    <property type="project" value="UniProtKB-UniRule"/>
</dbReference>
<dbReference type="GO" id="GO:0032259">
    <property type="term" value="P:methylation"/>
    <property type="evidence" value="ECO:0007669"/>
    <property type="project" value="UniProtKB-KW"/>
</dbReference>
<dbReference type="CDD" id="cd02440">
    <property type="entry name" value="AdoMet_MTases"/>
    <property type="match status" value="1"/>
</dbReference>
<dbReference type="Gene3D" id="3.40.50.150">
    <property type="entry name" value="Vaccinia Virus protein VP39"/>
    <property type="match status" value="1"/>
</dbReference>
<dbReference type="HAMAP" id="MF_01813">
    <property type="entry name" value="MenG_UbiE_methyltr"/>
    <property type="match status" value="1"/>
</dbReference>
<dbReference type="InterPro" id="IPR029063">
    <property type="entry name" value="SAM-dependent_MTases_sf"/>
</dbReference>
<dbReference type="InterPro" id="IPR004033">
    <property type="entry name" value="UbiE/COQ5_MeTrFase"/>
</dbReference>
<dbReference type="InterPro" id="IPR023576">
    <property type="entry name" value="UbiE/COQ5_MeTrFase_CS"/>
</dbReference>
<dbReference type="NCBIfam" id="TIGR01934">
    <property type="entry name" value="MenG_MenH_UbiE"/>
    <property type="match status" value="1"/>
</dbReference>
<dbReference type="NCBIfam" id="NF001241">
    <property type="entry name" value="PRK00216.1-2"/>
    <property type="match status" value="1"/>
</dbReference>
<dbReference type="PANTHER" id="PTHR43591:SF24">
    <property type="entry name" value="2-METHOXY-6-POLYPRENYL-1,4-BENZOQUINOL METHYLASE, MITOCHONDRIAL"/>
    <property type="match status" value="1"/>
</dbReference>
<dbReference type="PANTHER" id="PTHR43591">
    <property type="entry name" value="METHYLTRANSFERASE"/>
    <property type="match status" value="1"/>
</dbReference>
<dbReference type="Pfam" id="PF01209">
    <property type="entry name" value="Ubie_methyltran"/>
    <property type="match status" value="1"/>
</dbReference>
<dbReference type="SUPFAM" id="SSF53335">
    <property type="entry name" value="S-adenosyl-L-methionine-dependent methyltransferases"/>
    <property type="match status" value="1"/>
</dbReference>
<dbReference type="PROSITE" id="PS51608">
    <property type="entry name" value="SAM_MT_UBIE"/>
    <property type="match status" value="1"/>
</dbReference>
<dbReference type="PROSITE" id="PS01183">
    <property type="entry name" value="UBIE_1"/>
    <property type="match status" value="1"/>
</dbReference>
<dbReference type="PROSITE" id="PS01184">
    <property type="entry name" value="UBIE_2"/>
    <property type="match status" value="1"/>
</dbReference>
<proteinExistence type="inferred from homology"/>
<gene>
    <name evidence="1" type="primary">menG</name>
    <name type="ordered locus">MAP_4055</name>
</gene>
<sequence length="230" mass="24718">MSRAELDKNPRDVASMFDGVARRYDLTNTVLSLGQDRYWRKATRSALGIGPGQKVLDLAAGTAVSTVELNKSGAWCVAADFSVGMLAAGAARRVPKVAGDATRLPFADDVFDAVTISFGLRNVVDTQAALREMARVTRPGGRLVVCEFSTPSNALFATVYKEYLMRALPRVARAVSSNPDAYVYLAESIRAWPDQAALADQIAGAGWAGVRWRNLTGGIVALHAAHRPPR</sequence>
<reference key="1">
    <citation type="journal article" date="2005" name="Proc. Natl. Acad. Sci. U.S.A.">
        <title>The complete genome sequence of Mycobacterium avium subspecies paratuberculosis.</title>
        <authorList>
            <person name="Li L."/>
            <person name="Bannantine J.P."/>
            <person name="Zhang Q."/>
            <person name="Amonsin A."/>
            <person name="May B.J."/>
            <person name="Alt D."/>
            <person name="Banerji N."/>
            <person name="Kanjilal S."/>
            <person name="Kapur V."/>
        </authorList>
    </citation>
    <scope>NUCLEOTIDE SEQUENCE [LARGE SCALE GENOMIC DNA]</scope>
    <source>
        <strain>ATCC BAA-968 / K-10</strain>
    </source>
</reference>
<comment type="function">
    <text evidence="1">Methyltransferase required for the conversion of demethylmenaquinol (DMKH2) to menaquinol (MKH2).</text>
</comment>
<comment type="catalytic activity">
    <reaction evidence="1">
        <text>a 2-demethylmenaquinol + S-adenosyl-L-methionine = a menaquinol + S-adenosyl-L-homocysteine + H(+)</text>
        <dbReference type="Rhea" id="RHEA:42640"/>
        <dbReference type="Rhea" id="RHEA-COMP:9539"/>
        <dbReference type="Rhea" id="RHEA-COMP:9563"/>
        <dbReference type="ChEBI" id="CHEBI:15378"/>
        <dbReference type="ChEBI" id="CHEBI:18151"/>
        <dbReference type="ChEBI" id="CHEBI:55437"/>
        <dbReference type="ChEBI" id="CHEBI:57856"/>
        <dbReference type="ChEBI" id="CHEBI:59789"/>
        <dbReference type="EC" id="2.1.1.163"/>
    </reaction>
</comment>
<comment type="pathway">
    <text evidence="1">Quinol/quinone metabolism; menaquinone biosynthesis; menaquinol from 1,4-dihydroxy-2-naphthoate: step 2/2.</text>
</comment>
<comment type="similarity">
    <text evidence="1">Belongs to the class I-like SAM-binding methyltransferase superfamily. MenG/UbiE family.</text>
</comment>
<comment type="sequence caution" evidence="2">
    <conflict type="erroneous initiation">
        <sequence resource="EMBL-CDS" id="AAS06605"/>
    </conflict>
</comment>
<protein>
    <recommendedName>
        <fullName evidence="1">Demethylmenaquinone methyltransferase</fullName>
        <ecNumber evidence="1">2.1.1.163</ecNumber>
    </recommendedName>
</protein>
<feature type="chain" id="PRO_0000193296" description="Demethylmenaquinone methyltransferase">
    <location>
        <begin position="1"/>
        <end position="230"/>
    </location>
</feature>
<feature type="binding site" evidence="1">
    <location>
        <position position="62"/>
    </location>
    <ligand>
        <name>S-adenosyl-L-methionine</name>
        <dbReference type="ChEBI" id="CHEBI:59789"/>
    </ligand>
</feature>
<feature type="binding site" evidence="1">
    <location>
        <position position="80"/>
    </location>
    <ligand>
        <name>S-adenosyl-L-methionine</name>
        <dbReference type="ChEBI" id="CHEBI:59789"/>
    </ligand>
</feature>
<feature type="binding site" evidence="1">
    <location>
        <begin position="100"/>
        <end position="101"/>
    </location>
    <ligand>
        <name>S-adenosyl-L-methionine</name>
        <dbReference type="ChEBI" id="CHEBI:59789"/>
    </ligand>
</feature>
<feature type="binding site" evidence="1">
    <location>
        <position position="117"/>
    </location>
    <ligand>
        <name>S-adenosyl-L-methionine</name>
        <dbReference type="ChEBI" id="CHEBI:59789"/>
    </ligand>
</feature>
<accession>Q73SL8</accession>
<keyword id="KW-0474">Menaquinone biosynthesis</keyword>
<keyword id="KW-0489">Methyltransferase</keyword>
<keyword id="KW-1185">Reference proteome</keyword>
<keyword id="KW-0949">S-adenosyl-L-methionine</keyword>
<keyword id="KW-0808">Transferase</keyword>
<evidence type="ECO:0000255" key="1">
    <source>
        <dbReference type="HAMAP-Rule" id="MF_01813"/>
    </source>
</evidence>
<evidence type="ECO:0000305" key="2"/>
<name>MENG_MYCPA</name>